<gene>
    <name type="primary">clpB</name>
    <name type="ordered locus">lp_1903</name>
</gene>
<name>CLPB_LACPL</name>
<reference key="1">
    <citation type="journal article" date="2003" name="Proc. Natl. Acad. Sci. U.S.A.">
        <title>Complete genome sequence of Lactobacillus plantarum WCFS1.</title>
        <authorList>
            <person name="Kleerebezem M."/>
            <person name="Boekhorst J."/>
            <person name="van Kranenburg R."/>
            <person name="Molenaar D."/>
            <person name="Kuipers O.P."/>
            <person name="Leer R."/>
            <person name="Tarchini R."/>
            <person name="Peters S.A."/>
            <person name="Sandbrink H.M."/>
            <person name="Fiers M.W.E.J."/>
            <person name="Stiekema W."/>
            <person name="Klein Lankhorst R.M."/>
            <person name="Bron P.A."/>
            <person name="Hoffer S.M."/>
            <person name="Nierop Groot M.N."/>
            <person name="Kerkhoven R."/>
            <person name="De Vries M."/>
            <person name="Ursing B."/>
            <person name="De Vos W.M."/>
            <person name="Siezen R.J."/>
        </authorList>
    </citation>
    <scope>NUCLEOTIDE SEQUENCE [LARGE SCALE GENOMIC DNA]</scope>
    <source>
        <strain>ATCC BAA-793 / NCIMB 8826 / WCFS1</strain>
    </source>
</reference>
<reference key="2">
    <citation type="journal article" date="2012" name="J. Bacteriol.">
        <title>Complete resequencing and reannotation of the Lactobacillus plantarum WCFS1 genome.</title>
        <authorList>
            <person name="Siezen R.J."/>
            <person name="Francke C."/>
            <person name="Renckens B."/>
            <person name="Boekhorst J."/>
            <person name="Wels M."/>
            <person name="Kleerebezem M."/>
            <person name="van Hijum S.A."/>
        </authorList>
    </citation>
    <scope>NUCLEOTIDE SEQUENCE [LARGE SCALE GENOMIC DNA]</scope>
    <scope>GENOME REANNOTATION</scope>
    <source>
        <strain>ATCC BAA-793 / NCIMB 8826 / WCFS1</strain>
    </source>
</reference>
<sequence>MNPEQFTESLQQALQQAQQIAQTRRHQEIGVPHLFKFLTQPGELVRQIFSEAGADLDQLQTELDRELDDIAVVSGGNVQYGGSMSSSLATLMQAADAKRKALGDDYLATDTLALALMDQTGDQLTKYLNQQGITAGQVKNAVDRIRGGQRVTSRNQEDQYQALEKYGVDLVKQARQGNQDPVIGRDEEILDVIRILSRKTKNNPVLIGEPGVGKTAIVEGLAQRIVRGDVPENLKDKTLFSLDMGSLIAGAKYRGEFEERLKAVLKEIKKSDGQIIMFIDEIHNIVGAGKTEGSMDAGNLLKPMLARGELHLIGATTLDEYRQYMEKDKALERRFQKVLVAEPSVEDTISILRGLKERFEIHHGVRIHDNALVAAAKLSDRYITDRYLPDKALDLVDEASAEIRVEMNSNPTELDQVNRQLMRLEVEEAALKKETDDASVKRLADVQKELASAKEKQRTLSERWDSEKKSLQALSDKKSALDKAKHDLENAENNYDLEQAAKLQHGTIPKLEQELKAMEANDHHEDWLVEESVTPDQIANVVSRMTGIPVAKLVAGEREKLLHLADHLHERVVGQDAAVDAVSDAVLRSRAGLQDPNRPLGSFMFLGPTGVGKTELAKALAENLFDADDHMVRIDMSEYMEKESVSRLVGAAPGYVGYEEGGQLTEAVRRNPYSIVLFDEIEKAHPDVFNILLQVLDDGRLTDGQGRTVDFKNTILIMTSNLGSELLLAGVDDQGHLSADTHQQVMQLVQSRFKPEFLNRIDDIIMFTPLQLGAIEEIVVKLIDRLSARLQDREITLKISDEAKKWIAKQGYEPAYGARPLRRFITNHVETPLAKEIIAGRVAPKSTVAINLMDDHLVFENQSTQPA</sequence>
<feature type="chain" id="PRO_0000191132" description="Chaperone protein ClpB">
    <location>
        <begin position="1"/>
        <end position="867"/>
    </location>
</feature>
<feature type="domain" description="Clp R" evidence="2">
    <location>
        <begin position="3"/>
        <end position="148"/>
    </location>
</feature>
<feature type="region of interest" description="Repeat 1" evidence="2">
    <location>
        <begin position="6"/>
        <end position="70"/>
    </location>
</feature>
<feature type="region of interest" description="Repeat 2" evidence="2">
    <location>
        <begin position="84"/>
        <end position="148"/>
    </location>
</feature>
<feature type="region of interest" description="NBD1" evidence="1">
    <location>
        <begin position="161"/>
        <end position="342"/>
    </location>
</feature>
<feature type="region of interest" description="Linker" evidence="1">
    <location>
        <begin position="343"/>
        <end position="547"/>
    </location>
</feature>
<feature type="region of interest" description="NBD2" evidence="1">
    <location>
        <begin position="557"/>
        <end position="769"/>
    </location>
</feature>
<feature type="region of interest" description="C-terminal" evidence="1">
    <location>
        <begin position="770"/>
        <end position="867"/>
    </location>
</feature>
<feature type="coiled-coil region" evidence="1">
    <location>
        <begin position="393"/>
        <end position="526"/>
    </location>
</feature>
<feature type="binding site" evidence="1">
    <location>
        <begin position="208"/>
        <end position="215"/>
    </location>
    <ligand>
        <name>ATP</name>
        <dbReference type="ChEBI" id="CHEBI:30616"/>
        <label>1</label>
    </ligand>
</feature>
<feature type="binding site" evidence="1">
    <location>
        <begin position="607"/>
        <end position="614"/>
    </location>
    <ligand>
        <name>ATP</name>
        <dbReference type="ChEBI" id="CHEBI:30616"/>
        <label>2</label>
    </ligand>
</feature>
<evidence type="ECO:0000250" key="1"/>
<evidence type="ECO:0000255" key="2">
    <source>
        <dbReference type="PROSITE-ProRule" id="PRU01251"/>
    </source>
</evidence>
<evidence type="ECO:0000305" key="3"/>
<dbReference type="EMBL" id="AL935263">
    <property type="protein sequence ID" value="CCC79166.1"/>
    <property type="molecule type" value="Genomic_DNA"/>
</dbReference>
<dbReference type="RefSeq" id="WP_011101584.1">
    <property type="nucleotide sequence ID" value="NC_004567.2"/>
</dbReference>
<dbReference type="RefSeq" id="YP_004889680.1">
    <property type="nucleotide sequence ID" value="NC_004567.2"/>
</dbReference>
<dbReference type="SMR" id="Q88VX7"/>
<dbReference type="STRING" id="220668.lp_1903"/>
<dbReference type="EnsemblBacteria" id="CCC79166">
    <property type="protein sequence ID" value="CCC79166"/>
    <property type="gene ID" value="lp_1903"/>
</dbReference>
<dbReference type="GeneID" id="77218260"/>
<dbReference type="KEGG" id="lpl:lp_1903"/>
<dbReference type="PATRIC" id="fig|220668.9.peg.1603"/>
<dbReference type="eggNOG" id="COG0542">
    <property type="taxonomic scope" value="Bacteria"/>
</dbReference>
<dbReference type="HOGENOM" id="CLU_005070_4_0_9"/>
<dbReference type="OrthoDB" id="9803641at2"/>
<dbReference type="PhylomeDB" id="Q88VX7"/>
<dbReference type="Proteomes" id="UP000000432">
    <property type="component" value="Chromosome"/>
</dbReference>
<dbReference type="GO" id="GO:0005737">
    <property type="term" value="C:cytoplasm"/>
    <property type="evidence" value="ECO:0007669"/>
    <property type="project" value="UniProtKB-SubCell"/>
</dbReference>
<dbReference type="GO" id="GO:0005524">
    <property type="term" value="F:ATP binding"/>
    <property type="evidence" value="ECO:0007669"/>
    <property type="project" value="UniProtKB-KW"/>
</dbReference>
<dbReference type="GO" id="GO:0016887">
    <property type="term" value="F:ATP hydrolysis activity"/>
    <property type="evidence" value="ECO:0007669"/>
    <property type="project" value="InterPro"/>
</dbReference>
<dbReference type="GO" id="GO:0034605">
    <property type="term" value="P:cellular response to heat"/>
    <property type="evidence" value="ECO:0007669"/>
    <property type="project" value="TreeGrafter"/>
</dbReference>
<dbReference type="GO" id="GO:0042026">
    <property type="term" value="P:protein refolding"/>
    <property type="evidence" value="ECO:0007669"/>
    <property type="project" value="InterPro"/>
</dbReference>
<dbReference type="CDD" id="cd00009">
    <property type="entry name" value="AAA"/>
    <property type="match status" value="1"/>
</dbReference>
<dbReference type="CDD" id="cd19499">
    <property type="entry name" value="RecA-like_ClpB_Hsp104-like"/>
    <property type="match status" value="1"/>
</dbReference>
<dbReference type="FunFam" id="3.40.50.300:FF:000120">
    <property type="entry name" value="ATP-dependent chaperone ClpB"/>
    <property type="match status" value="1"/>
</dbReference>
<dbReference type="FunFam" id="3.40.50.300:FF:000025">
    <property type="entry name" value="ATP-dependent Clp protease subunit"/>
    <property type="match status" value="1"/>
</dbReference>
<dbReference type="FunFam" id="3.40.50.300:FF:000010">
    <property type="entry name" value="Chaperone clpB 1, putative"/>
    <property type="match status" value="1"/>
</dbReference>
<dbReference type="Gene3D" id="1.10.8.60">
    <property type="match status" value="1"/>
</dbReference>
<dbReference type="Gene3D" id="1.10.1780.10">
    <property type="entry name" value="Clp, N-terminal domain"/>
    <property type="match status" value="1"/>
</dbReference>
<dbReference type="Gene3D" id="3.40.50.300">
    <property type="entry name" value="P-loop containing nucleotide triphosphate hydrolases"/>
    <property type="match status" value="3"/>
</dbReference>
<dbReference type="InterPro" id="IPR003593">
    <property type="entry name" value="AAA+_ATPase"/>
</dbReference>
<dbReference type="InterPro" id="IPR003959">
    <property type="entry name" value="ATPase_AAA_core"/>
</dbReference>
<dbReference type="InterPro" id="IPR017730">
    <property type="entry name" value="Chaperonin_ClpB"/>
</dbReference>
<dbReference type="InterPro" id="IPR019489">
    <property type="entry name" value="Clp_ATPase_C"/>
</dbReference>
<dbReference type="InterPro" id="IPR036628">
    <property type="entry name" value="Clp_N_dom_sf"/>
</dbReference>
<dbReference type="InterPro" id="IPR004176">
    <property type="entry name" value="Clp_R_dom"/>
</dbReference>
<dbReference type="InterPro" id="IPR001270">
    <property type="entry name" value="ClpA/B"/>
</dbReference>
<dbReference type="InterPro" id="IPR018368">
    <property type="entry name" value="ClpA/B_CS1"/>
</dbReference>
<dbReference type="InterPro" id="IPR028299">
    <property type="entry name" value="ClpA/B_CS2"/>
</dbReference>
<dbReference type="InterPro" id="IPR041546">
    <property type="entry name" value="ClpA/ClpB_AAA_lid"/>
</dbReference>
<dbReference type="InterPro" id="IPR050130">
    <property type="entry name" value="ClpA_ClpB"/>
</dbReference>
<dbReference type="InterPro" id="IPR027417">
    <property type="entry name" value="P-loop_NTPase"/>
</dbReference>
<dbReference type="NCBIfam" id="TIGR03346">
    <property type="entry name" value="chaperone_ClpB"/>
    <property type="match status" value="1"/>
</dbReference>
<dbReference type="PANTHER" id="PTHR11638">
    <property type="entry name" value="ATP-DEPENDENT CLP PROTEASE"/>
    <property type="match status" value="1"/>
</dbReference>
<dbReference type="PANTHER" id="PTHR11638:SF18">
    <property type="entry name" value="HEAT SHOCK PROTEIN 104"/>
    <property type="match status" value="1"/>
</dbReference>
<dbReference type="Pfam" id="PF00004">
    <property type="entry name" value="AAA"/>
    <property type="match status" value="1"/>
</dbReference>
<dbReference type="Pfam" id="PF07724">
    <property type="entry name" value="AAA_2"/>
    <property type="match status" value="1"/>
</dbReference>
<dbReference type="Pfam" id="PF17871">
    <property type="entry name" value="AAA_lid_9"/>
    <property type="match status" value="1"/>
</dbReference>
<dbReference type="Pfam" id="PF02861">
    <property type="entry name" value="Clp_N"/>
    <property type="match status" value="2"/>
</dbReference>
<dbReference type="Pfam" id="PF10431">
    <property type="entry name" value="ClpB_D2-small"/>
    <property type="match status" value="1"/>
</dbReference>
<dbReference type="PRINTS" id="PR00300">
    <property type="entry name" value="CLPPROTEASEA"/>
</dbReference>
<dbReference type="SMART" id="SM00382">
    <property type="entry name" value="AAA"/>
    <property type="match status" value="2"/>
</dbReference>
<dbReference type="SMART" id="SM01086">
    <property type="entry name" value="ClpB_D2-small"/>
    <property type="match status" value="1"/>
</dbReference>
<dbReference type="SUPFAM" id="SSF81923">
    <property type="entry name" value="Double Clp-N motif"/>
    <property type="match status" value="1"/>
</dbReference>
<dbReference type="SUPFAM" id="SSF52540">
    <property type="entry name" value="P-loop containing nucleoside triphosphate hydrolases"/>
    <property type="match status" value="2"/>
</dbReference>
<dbReference type="PROSITE" id="PS51903">
    <property type="entry name" value="CLP_R"/>
    <property type="match status" value="1"/>
</dbReference>
<dbReference type="PROSITE" id="PS00870">
    <property type="entry name" value="CLPAB_1"/>
    <property type="match status" value="1"/>
</dbReference>
<dbReference type="PROSITE" id="PS00871">
    <property type="entry name" value="CLPAB_2"/>
    <property type="match status" value="1"/>
</dbReference>
<keyword id="KW-0067">ATP-binding</keyword>
<keyword id="KW-0143">Chaperone</keyword>
<keyword id="KW-0175">Coiled coil</keyword>
<keyword id="KW-0963">Cytoplasm</keyword>
<keyword id="KW-0547">Nucleotide-binding</keyword>
<keyword id="KW-1185">Reference proteome</keyword>
<keyword id="KW-0677">Repeat</keyword>
<keyword id="KW-0346">Stress response</keyword>
<proteinExistence type="inferred from homology"/>
<organism>
    <name type="scientific">Lactiplantibacillus plantarum (strain ATCC BAA-793 / NCIMB 8826 / WCFS1)</name>
    <name type="common">Lactobacillus plantarum</name>
    <dbReference type="NCBI Taxonomy" id="220668"/>
    <lineage>
        <taxon>Bacteria</taxon>
        <taxon>Bacillati</taxon>
        <taxon>Bacillota</taxon>
        <taxon>Bacilli</taxon>
        <taxon>Lactobacillales</taxon>
        <taxon>Lactobacillaceae</taxon>
        <taxon>Lactiplantibacillus</taxon>
    </lineage>
</organism>
<protein>
    <recommendedName>
        <fullName>Chaperone protein ClpB</fullName>
    </recommendedName>
</protein>
<accession>Q88VX7</accession>
<accession>F9UPM7</accession>
<comment type="function">
    <text evidence="1">Part of a stress-induced multi-chaperone system, it is involved in the recovery of the cell from heat-induced damage, in cooperation with DnaK, DnaJ and GrpE. Acts before DnaK, in the processing of protein aggregates. Protein binding stimulates the ATPase activity; ATP hydrolysis unfolds the denatured protein aggregates, which probably helps expose new hydrophobic binding sites on the surface of ClpB-bound aggregates, contributing to the solubilization and refolding of denatured protein aggregates by DnaK (By similarity).</text>
</comment>
<comment type="subunit">
    <text evidence="1">Homohexamer. The oligomerization is ATP-dependent (By similarity).</text>
</comment>
<comment type="subcellular location">
    <subcellularLocation>
        <location evidence="3">Cytoplasm</location>
    </subcellularLocation>
</comment>
<comment type="domain">
    <text evidence="1">The Clp repeat (R) domain probably functions as a substrate-discriminating domain, recruiting aggregated proteins to the ClpB hexamer and/or stabilizing bound proteins. The NBD2 domain is responsible for oligomerization, whereas the NBD1 domain stabilizes the hexamer probably in an ATP-dependent manner. The movement of the coiled-coil domain is essential for ClpB ability to rescue proteins from an aggregated state, probably by pulling apart large aggregated proteins, which are bound between the coiled-coils motifs of adjacent ClpB subunits in the functional hexamer (By similarity).</text>
</comment>
<comment type="similarity">
    <text evidence="3">Belongs to the ClpA/ClpB family.</text>
</comment>